<dbReference type="EMBL" id="L12366">
    <property type="protein sequence ID" value="AAA16345.1"/>
    <property type="molecule type" value="Unassigned_DNA"/>
</dbReference>
<dbReference type="EMBL" id="L12250">
    <property type="protein sequence ID" value="AAA16344.1"/>
    <property type="molecule type" value="Unassigned_DNA"/>
</dbReference>
<dbReference type="PIR" id="S39501">
    <property type="entry name" value="S39501"/>
</dbReference>
<dbReference type="SMR" id="P62127"/>
<dbReference type="GO" id="GO:0009507">
    <property type="term" value="C:chloroplast"/>
    <property type="evidence" value="ECO:0007669"/>
    <property type="project" value="UniProtKB-SubCell"/>
</dbReference>
<dbReference type="GO" id="GO:0015935">
    <property type="term" value="C:small ribosomal subunit"/>
    <property type="evidence" value="ECO:0007669"/>
    <property type="project" value="InterPro"/>
</dbReference>
<dbReference type="GO" id="GO:0019843">
    <property type="term" value="F:rRNA binding"/>
    <property type="evidence" value="ECO:0007669"/>
    <property type="project" value="UniProtKB-UniRule"/>
</dbReference>
<dbReference type="GO" id="GO:0003735">
    <property type="term" value="F:structural constituent of ribosome"/>
    <property type="evidence" value="ECO:0007669"/>
    <property type="project" value="InterPro"/>
</dbReference>
<dbReference type="GO" id="GO:0046677">
    <property type="term" value="P:response to antibiotic"/>
    <property type="evidence" value="ECO:0007669"/>
    <property type="project" value="UniProtKB-KW"/>
</dbReference>
<dbReference type="GO" id="GO:0006412">
    <property type="term" value="P:translation"/>
    <property type="evidence" value="ECO:0007669"/>
    <property type="project" value="UniProtKB-UniRule"/>
</dbReference>
<dbReference type="CDD" id="cd03368">
    <property type="entry name" value="Ribosomal_S12"/>
    <property type="match status" value="1"/>
</dbReference>
<dbReference type="FunFam" id="2.40.50.140:FF:000008">
    <property type="entry name" value="30S ribosomal protein S12, chloroplastic"/>
    <property type="match status" value="1"/>
</dbReference>
<dbReference type="Gene3D" id="2.40.50.140">
    <property type="entry name" value="Nucleic acid-binding proteins"/>
    <property type="match status" value="1"/>
</dbReference>
<dbReference type="HAMAP" id="MF_00403_B">
    <property type="entry name" value="Ribosomal_uS12_B"/>
    <property type="match status" value="1"/>
</dbReference>
<dbReference type="InterPro" id="IPR012340">
    <property type="entry name" value="NA-bd_OB-fold"/>
</dbReference>
<dbReference type="InterPro" id="IPR006032">
    <property type="entry name" value="Ribosomal_uS12"/>
</dbReference>
<dbReference type="InterPro" id="IPR005679">
    <property type="entry name" value="Ribosomal_uS12_bac"/>
</dbReference>
<dbReference type="NCBIfam" id="TIGR00981">
    <property type="entry name" value="rpsL_bact"/>
    <property type="match status" value="1"/>
</dbReference>
<dbReference type="PANTHER" id="PTHR11652">
    <property type="entry name" value="30S RIBOSOMAL PROTEIN S12 FAMILY MEMBER"/>
    <property type="match status" value="1"/>
</dbReference>
<dbReference type="Pfam" id="PF00164">
    <property type="entry name" value="Ribosom_S12_S23"/>
    <property type="match status" value="1"/>
</dbReference>
<dbReference type="PIRSF" id="PIRSF002133">
    <property type="entry name" value="Ribosomal_S12/S23"/>
    <property type="match status" value="1"/>
</dbReference>
<dbReference type="PRINTS" id="PR01034">
    <property type="entry name" value="RIBOSOMALS12"/>
</dbReference>
<dbReference type="SUPFAM" id="SSF50249">
    <property type="entry name" value="Nucleic acid-binding proteins"/>
    <property type="match status" value="1"/>
</dbReference>
<dbReference type="PROSITE" id="PS00055">
    <property type="entry name" value="RIBOSOMAL_S12"/>
    <property type="match status" value="1"/>
</dbReference>
<evidence type="ECO:0000250" key="1"/>
<evidence type="ECO:0000255" key="2">
    <source>
        <dbReference type="HAMAP-Rule" id="MF_00403"/>
    </source>
</evidence>
<evidence type="ECO:0000269" key="3">
    <source>
    </source>
</evidence>
<evidence type="ECO:0000305" key="4"/>
<name>RR12_NICPL</name>
<proteinExistence type="evidence at protein level"/>
<organism>
    <name type="scientific">Nicotiana plumbaginifolia</name>
    <name type="common">Leadwort-leaved tobacco</name>
    <name type="synonym">Tex-Mex tobacco</name>
    <dbReference type="NCBI Taxonomy" id="4092"/>
    <lineage>
        <taxon>Eukaryota</taxon>
        <taxon>Viridiplantae</taxon>
        <taxon>Streptophyta</taxon>
        <taxon>Embryophyta</taxon>
        <taxon>Tracheophyta</taxon>
        <taxon>Spermatophyta</taxon>
        <taxon>Magnoliopsida</taxon>
        <taxon>eudicotyledons</taxon>
        <taxon>Gunneridae</taxon>
        <taxon>Pentapetalae</taxon>
        <taxon>asterids</taxon>
        <taxon>lamiids</taxon>
        <taxon>Solanales</taxon>
        <taxon>Solanaceae</taxon>
        <taxon>Nicotianoideae</taxon>
        <taxon>Nicotianeae</taxon>
        <taxon>Nicotiana</taxon>
    </lineage>
</organism>
<comment type="function">
    <text evidence="1">With S4 and S5 plays an important role in translational accuracy. Located at the interface of the 30S and 50S subunits (By similarity).</text>
</comment>
<comment type="subunit">
    <text>Part of the 30S ribosomal subunit.</text>
</comment>
<comment type="subcellular location">
    <subcellularLocation>
        <location>Plastid</location>
        <location>Chloroplast</location>
    </subcellularLocation>
</comment>
<comment type="miscellaneous">
    <text evidence="1">Exons 2 and 3 are cis-spliced, while a trans-splicing reaction is required to link exons 1 and 2.</text>
</comment>
<comment type="similarity">
    <text evidence="4">Belongs to the universal ribosomal protein uS12 family.</text>
</comment>
<sequence length="123" mass="13764">MPTIKQLIRNTRQPIRNVTKSPALRGCPQRRGTCTRVYTITPKKPNSALRKVARVRLTSGFEITAYIPGIGHNLQEHSVVLVRGGRVKDLPGVRYHIVRGTLDAVGVKDRQQGRSKYGVKKPK</sequence>
<geneLocation type="chloroplast"/>
<gene>
    <name type="primary">rps12</name>
    <name type="synonym">rps12-3</name>
</gene>
<accession>P62127</accession>
<accession>P06369</accession>
<accession>P28806</accession>
<accession>P56803</accession>
<accession>Q9XQZ8</accession>
<protein>
    <recommendedName>
        <fullName evidence="2">Small ribosomal subunit protein uS12c</fullName>
    </recommendedName>
    <alternativeName>
        <fullName>30S ribosomal protein S12, chloroplastic</fullName>
    </alternativeName>
</protein>
<feature type="initiator methionine" description="Removed" evidence="1">
    <location>
        <position position="1"/>
    </location>
</feature>
<feature type="chain" id="PRO_0000146410" description="Small ribosomal subunit protein uS12c">
    <location>
        <begin position="2"/>
        <end position="123"/>
    </location>
</feature>
<feature type="mutagenesis site" description="Streptomycin resistance in strain SR1018." evidence="3">
    <original>K</original>
    <variation>R</variation>
    <location>
        <position position="88"/>
    </location>
</feature>
<reference key="1">
    <citation type="journal article" date="1993" name="Plant Mol. Biol.">
        <title>A point mutation in the chloroplast rps12 gene from Nicotiana plumbaginifolia confers streptomycin resistance.</title>
        <authorList>
            <person name="Hsu C.-M."/>
            <person name="Yang W.-P."/>
            <person name="Chen C.-C."/>
            <person name="Lai Y.-K."/>
            <person name="Lin T.-Y."/>
        </authorList>
    </citation>
    <scope>NUCLEOTIDE SEQUENCE</scope>
    <scope>STREPTOMYCIN RESISTANT MUTANT</scope>
    <scope>MUTAGENESIS OF LYS-88</scope>
    <source>
        <strain>cv. Viviani</strain>
        <tissue>Leaf</tissue>
    </source>
</reference>
<keyword id="KW-0046">Antibiotic resistance</keyword>
<keyword id="KW-0150">Chloroplast</keyword>
<keyword id="KW-0934">Plastid</keyword>
<keyword id="KW-0687">Ribonucleoprotein</keyword>
<keyword id="KW-0689">Ribosomal protein</keyword>
<keyword id="KW-0694">RNA-binding</keyword>
<keyword id="KW-0699">rRNA-binding</keyword>